<name>ULP2A_ARATH</name>
<gene>
    <name type="primary">ULP2A</name>
    <name type="ordered locus">At4g33620</name>
    <name type="ORF">T16L1.110</name>
</gene>
<comment type="function">
    <text evidence="1">Protease that catalyzes two essential functions in the SUMO pathway: processing of full-length SUMOs to their mature forms and deconjugation of SUMO from targeted proteins.</text>
</comment>
<comment type="similarity">
    <text evidence="3">Belongs to the peptidase C48 family.</text>
</comment>
<comment type="sequence caution" evidence="3">
    <conflict type="miscellaneous discrepancy">
        <sequence resource="EMBL-CDS" id="BAF02249"/>
    </conflict>
    <text>Intron retention.</text>
</comment>
<comment type="sequence caution" evidence="3">
    <conflict type="erroneous gene model prediction">
        <sequence resource="EMBL-CDS" id="CAA20575"/>
    </conflict>
</comment>
<comment type="sequence caution" evidence="3">
    <conflict type="erroneous gene model prediction">
        <sequence resource="EMBL-CDS" id="CAB80079"/>
    </conflict>
</comment>
<proteinExistence type="evidence at transcript level"/>
<sequence>MTLRSVQSRSKRKPIDVFDYSDEDDRVEEESKKLLRKFDSPVTKKHHCAIDKYEFLRCFAKDTQSESKVLQHIVIDVEVPVKEEPSRCELSGDGNSDLIDVISNGSHRRIGIDSLTSSSLSENDEVSTGEATNPASDPHEVDPENAQVLIIPDVIIYGDIYCTNSKLTFSRNCMNVESSSVNATKGTFSCQWTIEDIIKIESQWCLEVETAFVNVLLKSRKPEGVDIAKDISGIDLLKFSVYDPKWSKEVETIRSLDSRYKNIWFDTITESEEIAFSGHDLGTSLTNLADSFEDLVYPQGEPDAVVVRKQDIELLKPRRFINDTIIDFYIKYLKNRISPKERGRFHFFNCFFFRKLANLDKGTPSTCGGREAYQRVQKWTKNVDLFEKDYIFIPINCSFHWSLVIICHPGELVPSHVENPQRVPCILHLDSIKGSHKGGLINIFPSYLREEWKARHENTTNDSSRAPNMQSISLELPQQENSFDCGLFLLHYLDLFVAQAPAKFNPSLISRSANFLTRNWFPAKEASLKRRNILELLYNLHKGHDPSILPANSKSEPPHCGVSNRNDQETESENVIECCNWIKPFDGSSSTVTDISQTKTCSPDLILSKEVSYSGGYDPPSSKLRKVFMSPIVEEVQESCEKKDHLEMDIQKSTGHEIETLRKEGCMLYIEDSDDEEAVSVEYVSDSQDSYEVEMKVEDDDDDELIVTGESSGIHGSREIKSDSASIERVNKSRDSTAASCYNDFLLVLSDDERSSDDKENILISSNVMAKPKT</sequence>
<protein>
    <recommendedName>
        <fullName>Probable ubiquitin-like-specific protease 2A</fullName>
        <ecNumber>3.4.22.-</ecNumber>
    </recommendedName>
</protein>
<organism>
    <name type="scientific">Arabidopsis thaliana</name>
    <name type="common">Mouse-ear cress</name>
    <dbReference type="NCBI Taxonomy" id="3702"/>
    <lineage>
        <taxon>Eukaryota</taxon>
        <taxon>Viridiplantae</taxon>
        <taxon>Streptophyta</taxon>
        <taxon>Embryophyta</taxon>
        <taxon>Tracheophyta</taxon>
        <taxon>Spermatophyta</taxon>
        <taxon>Magnoliopsida</taxon>
        <taxon>eudicotyledons</taxon>
        <taxon>Gunneridae</taxon>
        <taxon>Pentapetalae</taxon>
        <taxon>rosids</taxon>
        <taxon>malvids</taxon>
        <taxon>Brassicales</taxon>
        <taxon>Brassicaceae</taxon>
        <taxon>Camelineae</taxon>
        <taxon>Arabidopsis</taxon>
    </lineage>
</organism>
<dbReference type="EC" id="3.4.22.-"/>
<dbReference type="EMBL" id="AL031394">
    <property type="protein sequence ID" value="CAA20575.1"/>
    <property type="status" value="ALT_SEQ"/>
    <property type="molecule type" value="Genomic_DNA"/>
</dbReference>
<dbReference type="EMBL" id="AL161583">
    <property type="protein sequence ID" value="CAB80079.1"/>
    <property type="status" value="ALT_SEQ"/>
    <property type="molecule type" value="Genomic_DNA"/>
</dbReference>
<dbReference type="EMBL" id="CP002687">
    <property type="protein sequence ID" value="AEE86254.2"/>
    <property type="molecule type" value="Genomic_DNA"/>
</dbReference>
<dbReference type="EMBL" id="AK230453">
    <property type="protein sequence ID" value="BAF02249.1"/>
    <property type="status" value="ALT_SEQ"/>
    <property type="molecule type" value="mRNA"/>
</dbReference>
<dbReference type="PIR" id="T04979">
    <property type="entry name" value="T04979"/>
</dbReference>
<dbReference type="RefSeq" id="NP_001320126.1">
    <property type="nucleotide sequence ID" value="NM_001342223.1"/>
</dbReference>
<dbReference type="SMR" id="Q0WKV8"/>
<dbReference type="FunCoup" id="Q0WKV8">
    <property type="interactions" value="4"/>
</dbReference>
<dbReference type="STRING" id="3702.Q0WKV8"/>
<dbReference type="PaxDb" id="3702-AT4G33620.1"/>
<dbReference type="ProteomicsDB" id="245269"/>
<dbReference type="EnsemblPlants" id="AT4G33620.1">
    <property type="protein sequence ID" value="AT4G33620.1"/>
    <property type="gene ID" value="AT4G33620"/>
</dbReference>
<dbReference type="GeneID" id="829502"/>
<dbReference type="Gramene" id="AT4G33620.1">
    <property type="protein sequence ID" value="AT4G33620.1"/>
    <property type="gene ID" value="AT4G33620"/>
</dbReference>
<dbReference type="KEGG" id="ath:AT4G33620"/>
<dbReference type="Araport" id="AT4G33620"/>
<dbReference type="TAIR" id="AT4G33620">
    <property type="gene designation" value="SPF2"/>
</dbReference>
<dbReference type="eggNOG" id="KOG0779">
    <property type="taxonomic scope" value="Eukaryota"/>
</dbReference>
<dbReference type="HOGENOM" id="CLU_353883_0_0_1"/>
<dbReference type="InParanoid" id="Q0WKV8"/>
<dbReference type="OMA" id="INCSFHW"/>
<dbReference type="BRENDA" id="3.4.22.B67">
    <property type="organism ID" value="399"/>
</dbReference>
<dbReference type="PRO" id="PR:Q0WKV8"/>
<dbReference type="Proteomes" id="UP000006548">
    <property type="component" value="Chromosome 4"/>
</dbReference>
<dbReference type="ExpressionAtlas" id="Q0WKV8">
    <property type="expression patterns" value="baseline and differential"/>
</dbReference>
<dbReference type="GO" id="GO:0070139">
    <property type="term" value="F:SUMO-specific endopeptidase activity"/>
    <property type="evidence" value="ECO:0000250"/>
    <property type="project" value="UniProtKB"/>
</dbReference>
<dbReference type="GO" id="GO:0016926">
    <property type="term" value="P:protein desumoylation"/>
    <property type="evidence" value="ECO:0000250"/>
    <property type="project" value="UniProtKB"/>
</dbReference>
<dbReference type="GO" id="GO:0006508">
    <property type="term" value="P:proteolysis"/>
    <property type="evidence" value="ECO:0007669"/>
    <property type="project" value="UniProtKB-KW"/>
</dbReference>
<dbReference type="FunFam" id="3.30.310.130:FF:000006">
    <property type="entry name" value="Probable ubiquitin-like-specific protease 2B"/>
    <property type="match status" value="1"/>
</dbReference>
<dbReference type="Gene3D" id="1.10.418.20">
    <property type="match status" value="1"/>
</dbReference>
<dbReference type="Gene3D" id="3.30.310.130">
    <property type="entry name" value="Ubiquitin-related"/>
    <property type="match status" value="1"/>
</dbReference>
<dbReference type="InterPro" id="IPR038765">
    <property type="entry name" value="Papain-like_cys_pep_sf"/>
</dbReference>
<dbReference type="InterPro" id="IPR003653">
    <property type="entry name" value="Peptidase_C48_C"/>
</dbReference>
<dbReference type="PANTHER" id="PTHR47764:SF10">
    <property type="entry name" value="UBIQUITIN-LIKE-SPECIFIC PROTEASE 2A-RELATED"/>
    <property type="match status" value="1"/>
</dbReference>
<dbReference type="PANTHER" id="PTHR47764">
    <property type="entry name" value="UBIQUITIN-LIKE-SPECIFIC PROTEASE 2B-RELATED"/>
    <property type="match status" value="1"/>
</dbReference>
<dbReference type="Pfam" id="PF02902">
    <property type="entry name" value="Peptidase_C48"/>
    <property type="match status" value="1"/>
</dbReference>
<dbReference type="Pfam" id="PF25352">
    <property type="entry name" value="PH_ULP"/>
    <property type="match status" value="1"/>
</dbReference>
<dbReference type="SUPFAM" id="SSF54001">
    <property type="entry name" value="Cysteine proteinases"/>
    <property type="match status" value="1"/>
</dbReference>
<dbReference type="PROSITE" id="PS50600">
    <property type="entry name" value="ULP_PROTEASE"/>
    <property type="match status" value="1"/>
</dbReference>
<keyword id="KW-0378">Hydrolase</keyword>
<keyword id="KW-0645">Protease</keyword>
<keyword id="KW-1185">Reference proteome</keyword>
<keyword id="KW-0788">Thiol protease</keyword>
<keyword id="KW-0833">Ubl conjugation pathway</keyword>
<accession>Q0WKV8</accession>
<accession>F4JJ09</accession>
<accession>O81879</accession>
<reference key="1">
    <citation type="journal article" date="1999" name="Nature">
        <title>Sequence and analysis of chromosome 4 of the plant Arabidopsis thaliana.</title>
        <authorList>
            <person name="Mayer K.F.X."/>
            <person name="Schueller C."/>
            <person name="Wambutt R."/>
            <person name="Murphy G."/>
            <person name="Volckaert G."/>
            <person name="Pohl T."/>
            <person name="Duesterhoeft A."/>
            <person name="Stiekema W."/>
            <person name="Entian K.-D."/>
            <person name="Terryn N."/>
            <person name="Harris B."/>
            <person name="Ansorge W."/>
            <person name="Brandt P."/>
            <person name="Grivell L.A."/>
            <person name="Rieger M."/>
            <person name="Weichselgartner M."/>
            <person name="de Simone V."/>
            <person name="Obermaier B."/>
            <person name="Mache R."/>
            <person name="Mueller M."/>
            <person name="Kreis M."/>
            <person name="Delseny M."/>
            <person name="Puigdomenech P."/>
            <person name="Watson M."/>
            <person name="Schmidtheini T."/>
            <person name="Reichert B."/>
            <person name="Portetelle D."/>
            <person name="Perez-Alonso M."/>
            <person name="Boutry M."/>
            <person name="Bancroft I."/>
            <person name="Vos P."/>
            <person name="Hoheisel J."/>
            <person name="Zimmermann W."/>
            <person name="Wedler H."/>
            <person name="Ridley P."/>
            <person name="Langham S.-A."/>
            <person name="McCullagh B."/>
            <person name="Bilham L."/>
            <person name="Robben J."/>
            <person name="van der Schueren J."/>
            <person name="Grymonprez B."/>
            <person name="Chuang Y.-J."/>
            <person name="Vandenbussche F."/>
            <person name="Braeken M."/>
            <person name="Weltjens I."/>
            <person name="Voet M."/>
            <person name="Bastiaens I."/>
            <person name="Aert R."/>
            <person name="Defoor E."/>
            <person name="Weitzenegger T."/>
            <person name="Bothe G."/>
            <person name="Ramsperger U."/>
            <person name="Hilbert H."/>
            <person name="Braun M."/>
            <person name="Holzer E."/>
            <person name="Brandt A."/>
            <person name="Peters S."/>
            <person name="van Staveren M."/>
            <person name="Dirkse W."/>
            <person name="Mooijman P."/>
            <person name="Klein Lankhorst R."/>
            <person name="Rose M."/>
            <person name="Hauf J."/>
            <person name="Koetter P."/>
            <person name="Berneiser S."/>
            <person name="Hempel S."/>
            <person name="Feldpausch M."/>
            <person name="Lamberth S."/>
            <person name="Van den Daele H."/>
            <person name="De Keyser A."/>
            <person name="Buysshaert C."/>
            <person name="Gielen J."/>
            <person name="Villarroel R."/>
            <person name="De Clercq R."/>
            <person name="van Montagu M."/>
            <person name="Rogers J."/>
            <person name="Cronin A."/>
            <person name="Quail M.A."/>
            <person name="Bray-Allen S."/>
            <person name="Clark L."/>
            <person name="Doggett J."/>
            <person name="Hall S."/>
            <person name="Kay M."/>
            <person name="Lennard N."/>
            <person name="McLay K."/>
            <person name="Mayes R."/>
            <person name="Pettett A."/>
            <person name="Rajandream M.A."/>
            <person name="Lyne M."/>
            <person name="Benes V."/>
            <person name="Rechmann S."/>
            <person name="Borkova D."/>
            <person name="Bloecker H."/>
            <person name="Scharfe M."/>
            <person name="Grimm M."/>
            <person name="Loehnert T.-H."/>
            <person name="Dose S."/>
            <person name="de Haan M."/>
            <person name="Maarse A.C."/>
            <person name="Schaefer M."/>
            <person name="Mueller-Auer S."/>
            <person name="Gabel C."/>
            <person name="Fuchs M."/>
            <person name="Fartmann B."/>
            <person name="Granderath K."/>
            <person name="Dauner D."/>
            <person name="Herzl A."/>
            <person name="Neumann S."/>
            <person name="Argiriou A."/>
            <person name="Vitale D."/>
            <person name="Liguori R."/>
            <person name="Piravandi E."/>
            <person name="Massenet O."/>
            <person name="Quigley F."/>
            <person name="Clabauld G."/>
            <person name="Muendlein A."/>
            <person name="Felber R."/>
            <person name="Schnabl S."/>
            <person name="Hiller R."/>
            <person name="Schmidt W."/>
            <person name="Lecharny A."/>
            <person name="Aubourg S."/>
            <person name="Chefdor F."/>
            <person name="Cooke R."/>
            <person name="Berger C."/>
            <person name="Monfort A."/>
            <person name="Casacuberta E."/>
            <person name="Gibbons T."/>
            <person name="Weber N."/>
            <person name="Vandenbol M."/>
            <person name="Bargues M."/>
            <person name="Terol J."/>
            <person name="Torres A."/>
            <person name="Perez-Perez A."/>
            <person name="Purnelle B."/>
            <person name="Bent E."/>
            <person name="Johnson S."/>
            <person name="Tacon D."/>
            <person name="Jesse T."/>
            <person name="Heijnen L."/>
            <person name="Schwarz S."/>
            <person name="Scholler P."/>
            <person name="Heber S."/>
            <person name="Francs P."/>
            <person name="Bielke C."/>
            <person name="Frishman D."/>
            <person name="Haase D."/>
            <person name="Lemcke K."/>
            <person name="Mewes H.-W."/>
            <person name="Stocker S."/>
            <person name="Zaccaria P."/>
            <person name="Bevan M."/>
            <person name="Wilson R.K."/>
            <person name="de la Bastide M."/>
            <person name="Habermann K."/>
            <person name="Parnell L."/>
            <person name="Dedhia N."/>
            <person name="Gnoj L."/>
            <person name="Schutz K."/>
            <person name="Huang E."/>
            <person name="Spiegel L."/>
            <person name="Sekhon M."/>
            <person name="Murray J."/>
            <person name="Sheet P."/>
            <person name="Cordes M."/>
            <person name="Abu-Threideh J."/>
            <person name="Stoneking T."/>
            <person name="Kalicki J."/>
            <person name="Graves T."/>
            <person name="Harmon G."/>
            <person name="Edwards J."/>
            <person name="Latreille P."/>
            <person name="Courtney L."/>
            <person name="Cloud J."/>
            <person name="Abbott A."/>
            <person name="Scott K."/>
            <person name="Johnson D."/>
            <person name="Minx P."/>
            <person name="Bentley D."/>
            <person name="Fulton B."/>
            <person name="Miller N."/>
            <person name="Greco T."/>
            <person name="Kemp K."/>
            <person name="Kramer J."/>
            <person name="Fulton L."/>
            <person name="Mardis E."/>
            <person name="Dante M."/>
            <person name="Pepin K."/>
            <person name="Hillier L.W."/>
            <person name="Nelson J."/>
            <person name="Spieth J."/>
            <person name="Ryan E."/>
            <person name="Andrews S."/>
            <person name="Geisel C."/>
            <person name="Layman D."/>
            <person name="Du H."/>
            <person name="Ali J."/>
            <person name="Berghoff A."/>
            <person name="Jones K."/>
            <person name="Drone K."/>
            <person name="Cotton M."/>
            <person name="Joshu C."/>
            <person name="Antonoiu B."/>
            <person name="Zidanic M."/>
            <person name="Strong C."/>
            <person name="Sun H."/>
            <person name="Lamar B."/>
            <person name="Yordan C."/>
            <person name="Ma P."/>
            <person name="Zhong J."/>
            <person name="Preston R."/>
            <person name="Vil D."/>
            <person name="Shekher M."/>
            <person name="Matero A."/>
            <person name="Shah R."/>
            <person name="Swaby I.K."/>
            <person name="O'Shaughnessy A."/>
            <person name="Rodriguez M."/>
            <person name="Hoffman J."/>
            <person name="Till S."/>
            <person name="Granat S."/>
            <person name="Shohdy N."/>
            <person name="Hasegawa A."/>
            <person name="Hameed A."/>
            <person name="Lodhi M."/>
            <person name="Johnson A."/>
            <person name="Chen E."/>
            <person name="Marra M.A."/>
            <person name="Martienssen R."/>
            <person name="McCombie W.R."/>
        </authorList>
    </citation>
    <scope>NUCLEOTIDE SEQUENCE [LARGE SCALE GENOMIC DNA]</scope>
    <source>
        <strain>cv. Columbia</strain>
    </source>
</reference>
<reference key="2">
    <citation type="journal article" date="2017" name="Plant J.">
        <title>Araport11: a complete reannotation of the Arabidopsis thaliana reference genome.</title>
        <authorList>
            <person name="Cheng C.Y."/>
            <person name="Krishnakumar V."/>
            <person name="Chan A.P."/>
            <person name="Thibaud-Nissen F."/>
            <person name="Schobel S."/>
            <person name="Town C.D."/>
        </authorList>
    </citation>
    <scope>GENOME REANNOTATION</scope>
    <source>
        <strain>cv. Columbia</strain>
    </source>
</reference>
<reference key="3">
    <citation type="submission" date="2006-07" db="EMBL/GenBank/DDBJ databases">
        <title>Large-scale analysis of RIKEN Arabidopsis full-length (RAFL) cDNAs.</title>
        <authorList>
            <person name="Totoki Y."/>
            <person name="Seki M."/>
            <person name="Ishida J."/>
            <person name="Nakajima M."/>
            <person name="Enju A."/>
            <person name="Kamiya A."/>
            <person name="Narusaka M."/>
            <person name="Shin-i T."/>
            <person name="Nakagawa M."/>
            <person name="Sakamoto N."/>
            <person name="Oishi K."/>
            <person name="Kohara Y."/>
            <person name="Kobayashi M."/>
            <person name="Toyoda A."/>
            <person name="Sakaki Y."/>
            <person name="Sakurai T."/>
            <person name="Iida K."/>
            <person name="Akiyama K."/>
            <person name="Satou M."/>
            <person name="Toyoda T."/>
            <person name="Konagaya A."/>
            <person name="Carninci P."/>
            <person name="Kawai J."/>
            <person name="Hayashizaki Y."/>
            <person name="Shinozaki K."/>
        </authorList>
    </citation>
    <scope>NUCLEOTIDE SEQUENCE [LARGE SCALE MRNA]</scope>
    <source>
        <strain>cv. Columbia</strain>
    </source>
</reference>
<reference key="4">
    <citation type="journal article" date="2006" name="Plant Physiol.">
        <title>SUMO-conjugating and SUMO-deconjugating enzymes from Arabidopsis.</title>
        <authorList>
            <person name="Colby T."/>
            <person name="Matthai A."/>
            <person name="Boeckelmann A."/>
            <person name="Stuible H.P."/>
        </authorList>
    </citation>
    <scope>IDENTIFICATION</scope>
    <scope>GENE FAMILY</scope>
    <scope>NOMENCLATURE</scope>
</reference>
<evidence type="ECO:0000250" key="1"/>
<evidence type="ECO:0000256" key="2">
    <source>
        <dbReference type="SAM" id="MobiDB-lite"/>
    </source>
</evidence>
<evidence type="ECO:0000305" key="3"/>
<feature type="chain" id="PRO_0000395973" description="Probable ubiquitin-like-specific protease 2A">
    <location>
        <begin position="1"/>
        <end position="774"/>
    </location>
</feature>
<feature type="region of interest" description="Disordered" evidence="2">
    <location>
        <begin position="118"/>
        <end position="141"/>
    </location>
</feature>
<feature type="region of interest" description="Disordered" evidence="2">
    <location>
        <begin position="548"/>
        <end position="568"/>
    </location>
</feature>
<feature type="active site" evidence="1">
    <location>
        <position position="400"/>
    </location>
</feature>
<feature type="active site" evidence="1">
    <location>
        <position position="430"/>
    </location>
</feature>
<feature type="active site" evidence="1">
    <location>
        <position position="485"/>
    </location>
</feature>